<organism>
    <name type="scientific">Lacticaseibacillus rhamnosus</name>
    <name type="common">Lactobacillus rhamnosus</name>
    <dbReference type="NCBI Taxonomy" id="47715"/>
    <lineage>
        <taxon>Bacteria</taxon>
        <taxon>Bacillati</taxon>
        <taxon>Bacillota</taxon>
        <taxon>Bacilli</taxon>
        <taxon>Lactobacillales</taxon>
        <taxon>Lactobacillaceae</taxon>
        <taxon>Lacticaseibacillus</taxon>
    </lineage>
</organism>
<evidence type="ECO:0000269" key="1">
    <source>
    </source>
</evidence>
<evidence type="ECO:0000305" key="2"/>
<keyword id="KW-0903">Direct protein sequencing</keyword>
<keyword id="KW-0328">Glycosyltransferase</keyword>
<keyword id="KW-0808">Transferase</keyword>
<proteinExistence type="evidence at protein level"/>
<dbReference type="EC" id="2.4.2.4"/>
<dbReference type="PIR" id="S11384">
    <property type="entry name" value="S11384"/>
</dbReference>
<dbReference type="STRING" id="47715.AWJ15_00520"/>
<dbReference type="eggNOG" id="COG0057">
    <property type="taxonomic scope" value="Bacteria"/>
</dbReference>
<dbReference type="GO" id="GO:0009032">
    <property type="term" value="F:thymidine phosphorylase activity"/>
    <property type="evidence" value="ECO:0007669"/>
    <property type="project" value="UniProtKB-EC"/>
</dbReference>
<dbReference type="Gene3D" id="3.40.50.720">
    <property type="entry name" value="NAD(P)-binding Rossmann-like Domain"/>
    <property type="match status" value="1"/>
</dbReference>
<dbReference type="InterPro" id="IPR036291">
    <property type="entry name" value="NAD(P)-bd_dom_sf"/>
</dbReference>
<dbReference type="SUPFAM" id="SSF51735">
    <property type="entry name" value="NAD(P)-binding Rossmann-fold domains"/>
    <property type="match status" value="1"/>
</dbReference>
<accession>P19663</accession>
<gene>
    <name type="primary">deoA</name>
</gene>
<comment type="function">
    <text>The enzymes which catalyze the reversible phosphorolysis of pyrimidine nucleosides are involved in the degradation of these compounds and in their utilization as carbon and energy sources, or in the rescue of pyrimidine bases for nucleotide synthesis.</text>
</comment>
<comment type="catalytic activity">
    <reaction>
        <text>thymidine + phosphate = 2-deoxy-alpha-D-ribose 1-phosphate + thymine</text>
        <dbReference type="Rhea" id="RHEA:16037"/>
        <dbReference type="ChEBI" id="CHEBI:17748"/>
        <dbReference type="ChEBI" id="CHEBI:17821"/>
        <dbReference type="ChEBI" id="CHEBI:43474"/>
        <dbReference type="ChEBI" id="CHEBI:57259"/>
        <dbReference type="EC" id="2.4.2.4"/>
    </reaction>
</comment>
<comment type="subunit">
    <text evidence="1">Homodimer.</text>
</comment>
<comment type="similarity">
    <text evidence="2">Belongs to the thymidine/pyrimidine-nucleoside phosphorylase family.</text>
</comment>
<sequence length="23" mass="2752">MVKIGINEFGRIGRLAFRRIYEL</sequence>
<protein>
    <recommendedName>
        <fullName>Thymidine phosphorylase</fullName>
        <ecNumber>2.4.2.4</ecNumber>
    </recommendedName>
    <alternativeName>
        <fullName>TdRPase</fullName>
    </alternativeName>
</protein>
<feature type="chain" id="PRO_0000059077" description="Thymidine phosphorylase">
    <location>
        <begin position="1"/>
        <end position="23" status="greater than"/>
    </location>
</feature>
<feature type="non-terminal residue">
    <location>
        <position position="23"/>
    </location>
</feature>
<reference key="1">
    <citation type="journal article" date="1990" name="Biochim. Biophys. Acta">
        <title>Purification and characterization of uridine and thymidine phosphorylase from Lactobacillus casei.</title>
        <authorList>
            <person name="Avraham Y."/>
            <person name="Grossowicz N."/>
            <person name="Yashphe J."/>
        </authorList>
    </citation>
    <scope>PROTEIN SEQUENCE</scope>
    <scope>SUBUNIT</scope>
    <source>
        <strain>ATCC 7469 / DSM 20021 / JCM 1136 / CCUG 21452 / KCTC 1046 / NCDO 243 / NCIMB 6375 / NCTC 12953</strain>
    </source>
</reference>
<name>TYPH_LACRH</name>